<comment type="function">
    <text evidence="1">Involved in the binding of tRNA to the ribosomes.</text>
</comment>
<comment type="subunit">
    <text evidence="1">Part of the 30S ribosomal subunit.</text>
</comment>
<comment type="similarity">
    <text evidence="1">Belongs to the universal ribosomal protein uS10 family.</text>
</comment>
<protein>
    <recommendedName>
        <fullName evidence="1">Small ribosomal subunit protein uS10</fullName>
    </recommendedName>
    <alternativeName>
        <fullName evidence="2">30S ribosomal protein S10</fullName>
    </alternativeName>
</protein>
<sequence>MQNQRIRIRLKGFDHRLIDQSTAEIVETAKRTGAQVRGPIPLPTRKERYTILISPHVNKDARDQYELRTHKRLVDIVEPTEKTVDALMRLDLAAGVDVQISLG</sequence>
<proteinExistence type="inferred from homology"/>
<accession>A3DA73</accession>
<gene>
    <name evidence="1" type="primary">rpsJ</name>
    <name type="ordered locus">Sbal_4171</name>
</gene>
<evidence type="ECO:0000255" key="1">
    <source>
        <dbReference type="HAMAP-Rule" id="MF_00508"/>
    </source>
</evidence>
<evidence type="ECO:0000305" key="2"/>
<keyword id="KW-1185">Reference proteome</keyword>
<keyword id="KW-0687">Ribonucleoprotein</keyword>
<keyword id="KW-0689">Ribosomal protein</keyword>
<feature type="chain" id="PRO_1000015107" description="Small ribosomal subunit protein uS10">
    <location>
        <begin position="1"/>
        <end position="103"/>
    </location>
</feature>
<name>RS10_SHEB5</name>
<dbReference type="EMBL" id="CP000563">
    <property type="protein sequence ID" value="ABN63636.1"/>
    <property type="molecule type" value="Genomic_DNA"/>
</dbReference>
<dbReference type="RefSeq" id="WP_006083601.1">
    <property type="nucleotide sequence ID" value="NC_009052.1"/>
</dbReference>
<dbReference type="SMR" id="A3DA73"/>
<dbReference type="STRING" id="325240.Sbal_4171"/>
<dbReference type="GeneID" id="67441759"/>
<dbReference type="KEGG" id="sbl:Sbal_4171"/>
<dbReference type="HOGENOM" id="CLU_122625_1_3_6"/>
<dbReference type="OrthoDB" id="9804464at2"/>
<dbReference type="Proteomes" id="UP000001557">
    <property type="component" value="Chromosome"/>
</dbReference>
<dbReference type="GO" id="GO:1990904">
    <property type="term" value="C:ribonucleoprotein complex"/>
    <property type="evidence" value="ECO:0007669"/>
    <property type="project" value="UniProtKB-KW"/>
</dbReference>
<dbReference type="GO" id="GO:0005840">
    <property type="term" value="C:ribosome"/>
    <property type="evidence" value="ECO:0007669"/>
    <property type="project" value="UniProtKB-KW"/>
</dbReference>
<dbReference type="GO" id="GO:0003735">
    <property type="term" value="F:structural constituent of ribosome"/>
    <property type="evidence" value="ECO:0007669"/>
    <property type="project" value="InterPro"/>
</dbReference>
<dbReference type="GO" id="GO:0000049">
    <property type="term" value="F:tRNA binding"/>
    <property type="evidence" value="ECO:0007669"/>
    <property type="project" value="UniProtKB-UniRule"/>
</dbReference>
<dbReference type="GO" id="GO:0006412">
    <property type="term" value="P:translation"/>
    <property type="evidence" value="ECO:0007669"/>
    <property type="project" value="UniProtKB-UniRule"/>
</dbReference>
<dbReference type="FunFam" id="3.30.70.600:FF:000001">
    <property type="entry name" value="30S ribosomal protein S10"/>
    <property type="match status" value="1"/>
</dbReference>
<dbReference type="Gene3D" id="3.30.70.600">
    <property type="entry name" value="Ribosomal protein S10 domain"/>
    <property type="match status" value="1"/>
</dbReference>
<dbReference type="HAMAP" id="MF_00508">
    <property type="entry name" value="Ribosomal_uS10"/>
    <property type="match status" value="1"/>
</dbReference>
<dbReference type="InterPro" id="IPR001848">
    <property type="entry name" value="Ribosomal_uS10"/>
</dbReference>
<dbReference type="InterPro" id="IPR018268">
    <property type="entry name" value="Ribosomal_uS10_CS"/>
</dbReference>
<dbReference type="InterPro" id="IPR027486">
    <property type="entry name" value="Ribosomal_uS10_dom"/>
</dbReference>
<dbReference type="InterPro" id="IPR036838">
    <property type="entry name" value="Ribosomal_uS10_dom_sf"/>
</dbReference>
<dbReference type="NCBIfam" id="NF001861">
    <property type="entry name" value="PRK00596.1"/>
    <property type="match status" value="1"/>
</dbReference>
<dbReference type="NCBIfam" id="TIGR01049">
    <property type="entry name" value="rpsJ_bact"/>
    <property type="match status" value="1"/>
</dbReference>
<dbReference type="PANTHER" id="PTHR11700">
    <property type="entry name" value="30S RIBOSOMAL PROTEIN S10 FAMILY MEMBER"/>
    <property type="match status" value="1"/>
</dbReference>
<dbReference type="Pfam" id="PF00338">
    <property type="entry name" value="Ribosomal_S10"/>
    <property type="match status" value="1"/>
</dbReference>
<dbReference type="PRINTS" id="PR00971">
    <property type="entry name" value="RIBOSOMALS10"/>
</dbReference>
<dbReference type="SMART" id="SM01403">
    <property type="entry name" value="Ribosomal_S10"/>
    <property type="match status" value="1"/>
</dbReference>
<dbReference type="SUPFAM" id="SSF54999">
    <property type="entry name" value="Ribosomal protein S10"/>
    <property type="match status" value="1"/>
</dbReference>
<dbReference type="PROSITE" id="PS00361">
    <property type="entry name" value="RIBOSOMAL_S10"/>
    <property type="match status" value="1"/>
</dbReference>
<reference key="1">
    <citation type="submission" date="2007-02" db="EMBL/GenBank/DDBJ databases">
        <title>Complete sequence of chromosome of Shewanella baltica OS155.</title>
        <authorList>
            <consortium name="US DOE Joint Genome Institute"/>
            <person name="Copeland A."/>
            <person name="Lucas S."/>
            <person name="Lapidus A."/>
            <person name="Barry K."/>
            <person name="Detter J.C."/>
            <person name="Glavina del Rio T."/>
            <person name="Hammon N."/>
            <person name="Israni S."/>
            <person name="Dalin E."/>
            <person name="Tice H."/>
            <person name="Pitluck S."/>
            <person name="Sims D.R."/>
            <person name="Brettin T."/>
            <person name="Bruce D."/>
            <person name="Han C."/>
            <person name="Tapia R."/>
            <person name="Brainard J."/>
            <person name="Schmutz J."/>
            <person name="Larimer F."/>
            <person name="Land M."/>
            <person name="Hauser L."/>
            <person name="Kyrpides N."/>
            <person name="Mikhailova N."/>
            <person name="Brettar I."/>
            <person name="Klappenbach J."/>
            <person name="Konstantinidis K."/>
            <person name="Rodrigues J."/>
            <person name="Tiedje J."/>
            <person name="Richardson P."/>
        </authorList>
    </citation>
    <scope>NUCLEOTIDE SEQUENCE [LARGE SCALE GENOMIC DNA]</scope>
    <source>
        <strain>OS155 / ATCC BAA-1091</strain>
    </source>
</reference>
<organism>
    <name type="scientific">Shewanella baltica (strain OS155 / ATCC BAA-1091)</name>
    <dbReference type="NCBI Taxonomy" id="325240"/>
    <lineage>
        <taxon>Bacteria</taxon>
        <taxon>Pseudomonadati</taxon>
        <taxon>Pseudomonadota</taxon>
        <taxon>Gammaproteobacteria</taxon>
        <taxon>Alteromonadales</taxon>
        <taxon>Shewanellaceae</taxon>
        <taxon>Shewanella</taxon>
    </lineage>
</organism>